<organism>
    <name type="scientific">Brucella canis (strain ATCC 23365 / NCTC 10854 / RM-666)</name>
    <dbReference type="NCBI Taxonomy" id="483179"/>
    <lineage>
        <taxon>Bacteria</taxon>
        <taxon>Pseudomonadati</taxon>
        <taxon>Pseudomonadota</taxon>
        <taxon>Alphaproteobacteria</taxon>
        <taxon>Hyphomicrobiales</taxon>
        <taxon>Brucellaceae</taxon>
        <taxon>Brucella/Ochrobactrum group</taxon>
        <taxon>Brucella</taxon>
    </lineage>
</organism>
<proteinExistence type="inferred from homology"/>
<gene>
    <name evidence="1" type="primary">msrA</name>
    <name type="ordered locus">BCAN_B1091</name>
</gene>
<dbReference type="EC" id="1.8.4.11" evidence="1"/>
<dbReference type="EMBL" id="CP000873">
    <property type="protein sequence ID" value="ABX64232.1"/>
    <property type="molecule type" value="Genomic_DNA"/>
</dbReference>
<dbReference type="RefSeq" id="WP_002965585.1">
    <property type="nucleotide sequence ID" value="NC_010104.1"/>
</dbReference>
<dbReference type="SMR" id="A9MCZ5"/>
<dbReference type="GeneID" id="97534887"/>
<dbReference type="KEGG" id="bcs:BCAN_B1091"/>
<dbReference type="HOGENOM" id="CLU_031040_10_3_5"/>
<dbReference type="PhylomeDB" id="A9MCZ5"/>
<dbReference type="Proteomes" id="UP000001385">
    <property type="component" value="Chromosome II"/>
</dbReference>
<dbReference type="GO" id="GO:0005737">
    <property type="term" value="C:cytoplasm"/>
    <property type="evidence" value="ECO:0007669"/>
    <property type="project" value="TreeGrafter"/>
</dbReference>
<dbReference type="GO" id="GO:0036456">
    <property type="term" value="F:L-methionine-(S)-S-oxide reductase activity"/>
    <property type="evidence" value="ECO:0007669"/>
    <property type="project" value="TreeGrafter"/>
</dbReference>
<dbReference type="GO" id="GO:0008113">
    <property type="term" value="F:peptide-methionine (S)-S-oxide reductase activity"/>
    <property type="evidence" value="ECO:0007669"/>
    <property type="project" value="UniProtKB-UniRule"/>
</dbReference>
<dbReference type="GO" id="GO:0034599">
    <property type="term" value="P:cellular response to oxidative stress"/>
    <property type="evidence" value="ECO:0007669"/>
    <property type="project" value="TreeGrafter"/>
</dbReference>
<dbReference type="GO" id="GO:0036211">
    <property type="term" value="P:protein modification process"/>
    <property type="evidence" value="ECO:0007669"/>
    <property type="project" value="UniProtKB-UniRule"/>
</dbReference>
<dbReference type="FunFam" id="3.30.1060.10:FF:000001">
    <property type="entry name" value="Peptide methionine sulfoxide reductase MsrA"/>
    <property type="match status" value="1"/>
</dbReference>
<dbReference type="Gene3D" id="3.30.1060.10">
    <property type="entry name" value="Peptide methionine sulphoxide reductase MsrA"/>
    <property type="match status" value="1"/>
</dbReference>
<dbReference type="HAMAP" id="MF_01401">
    <property type="entry name" value="MsrA"/>
    <property type="match status" value="1"/>
</dbReference>
<dbReference type="InterPro" id="IPR002569">
    <property type="entry name" value="Met_Sox_Rdtase_MsrA_dom"/>
</dbReference>
<dbReference type="InterPro" id="IPR036509">
    <property type="entry name" value="Met_Sox_Rdtase_MsrA_sf"/>
</dbReference>
<dbReference type="InterPro" id="IPR050162">
    <property type="entry name" value="MsrA_MetSO_reductase"/>
</dbReference>
<dbReference type="NCBIfam" id="TIGR00401">
    <property type="entry name" value="msrA"/>
    <property type="match status" value="1"/>
</dbReference>
<dbReference type="PANTHER" id="PTHR42799">
    <property type="entry name" value="MITOCHONDRIAL PEPTIDE METHIONINE SULFOXIDE REDUCTASE"/>
    <property type="match status" value="1"/>
</dbReference>
<dbReference type="PANTHER" id="PTHR42799:SF2">
    <property type="entry name" value="MITOCHONDRIAL PEPTIDE METHIONINE SULFOXIDE REDUCTASE"/>
    <property type="match status" value="1"/>
</dbReference>
<dbReference type="Pfam" id="PF01625">
    <property type="entry name" value="PMSR"/>
    <property type="match status" value="1"/>
</dbReference>
<dbReference type="SUPFAM" id="SSF55068">
    <property type="entry name" value="Peptide methionine sulfoxide reductase"/>
    <property type="match status" value="1"/>
</dbReference>
<comment type="function">
    <text evidence="1">Has an important function as a repair enzyme for proteins that have been inactivated by oxidation. Catalyzes the reversible oxidation-reduction of methionine sulfoxide in proteins to methionine.</text>
</comment>
<comment type="catalytic activity">
    <reaction evidence="1">
        <text>L-methionyl-[protein] + [thioredoxin]-disulfide + H2O = L-methionyl-(S)-S-oxide-[protein] + [thioredoxin]-dithiol</text>
        <dbReference type="Rhea" id="RHEA:14217"/>
        <dbReference type="Rhea" id="RHEA-COMP:10698"/>
        <dbReference type="Rhea" id="RHEA-COMP:10700"/>
        <dbReference type="Rhea" id="RHEA-COMP:12313"/>
        <dbReference type="Rhea" id="RHEA-COMP:12315"/>
        <dbReference type="ChEBI" id="CHEBI:15377"/>
        <dbReference type="ChEBI" id="CHEBI:16044"/>
        <dbReference type="ChEBI" id="CHEBI:29950"/>
        <dbReference type="ChEBI" id="CHEBI:44120"/>
        <dbReference type="ChEBI" id="CHEBI:50058"/>
        <dbReference type="EC" id="1.8.4.11"/>
    </reaction>
</comment>
<comment type="catalytic activity">
    <reaction evidence="1">
        <text>[thioredoxin]-disulfide + L-methionine + H2O = L-methionine (S)-S-oxide + [thioredoxin]-dithiol</text>
        <dbReference type="Rhea" id="RHEA:19993"/>
        <dbReference type="Rhea" id="RHEA-COMP:10698"/>
        <dbReference type="Rhea" id="RHEA-COMP:10700"/>
        <dbReference type="ChEBI" id="CHEBI:15377"/>
        <dbReference type="ChEBI" id="CHEBI:29950"/>
        <dbReference type="ChEBI" id="CHEBI:50058"/>
        <dbReference type="ChEBI" id="CHEBI:57844"/>
        <dbReference type="ChEBI" id="CHEBI:58772"/>
        <dbReference type="EC" id="1.8.4.11"/>
    </reaction>
</comment>
<comment type="similarity">
    <text evidence="1">Belongs to the MsrA Met sulfoxide reductase family.</text>
</comment>
<sequence length="218" mass="24017">MSFFDSYRKKMQMPSKEEVLPGRVQPIPTAAAHFVSGHPLKGPWPDGMKQVLFGMGCFWGAERLFWQVPGVYVTAVGYAGGITPNPTYEETCTGLTGHAEVVLVVYDPKVVTLNELLALFWEEHDPTQGMRQGNDIGTTYRSVIYTFNAVDRAVAEKSRDAYSQALASRGLGPVTTQIADAPDFYYAEDYHQQYLAKNPDGYCGLRGTGVSCPIPLAH</sequence>
<evidence type="ECO:0000255" key="1">
    <source>
        <dbReference type="HAMAP-Rule" id="MF_01401"/>
    </source>
</evidence>
<protein>
    <recommendedName>
        <fullName evidence="1">Peptide methionine sulfoxide reductase MsrA</fullName>
        <shortName evidence="1">Protein-methionine-S-oxide reductase</shortName>
        <ecNumber evidence="1">1.8.4.11</ecNumber>
    </recommendedName>
    <alternativeName>
        <fullName evidence="1">Peptide-methionine (S)-S-oxide reductase</fullName>
        <shortName evidence="1">Peptide Met(O) reductase</shortName>
    </alternativeName>
</protein>
<keyword id="KW-0560">Oxidoreductase</keyword>
<keyword id="KW-1185">Reference proteome</keyword>
<name>MSRA_BRUC2</name>
<accession>A9MCZ5</accession>
<feature type="chain" id="PRO_1000087345" description="Peptide methionine sulfoxide reductase MsrA">
    <location>
        <begin position="1"/>
        <end position="218"/>
    </location>
</feature>
<feature type="active site" evidence="1">
    <location>
        <position position="57"/>
    </location>
</feature>
<reference key="1">
    <citation type="submission" date="2007-10" db="EMBL/GenBank/DDBJ databases">
        <title>Brucella canis ATCC 23365 whole genome shotgun sequencing project.</title>
        <authorList>
            <person name="Setubal J.C."/>
            <person name="Bowns C."/>
            <person name="Boyle S."/>
            <person name="Crasta O.R."/>
            <person name="Czar M.J."/>
            <person name="Dharmanolla C."/>
            <person name="Gillespie J.J."/>
            <person name="Kenyon R.W."/>
            <person name="Lu J."/>
            <person name="Mane S."/>
            <person name="Mohapatra S."/>
            <person name="Nagrani S."/>
            <person name="Purkayastha A."/>
            <person name="Rajasimha H.K."/>
            <person name="Shallom J.M."/>
            <person name="Shallom S."/>
            <person name="Shukla M."/>
            <person name="Snyder E.E."/>
            <person name="Sobral B.W."/>
            <person name="Wattam A.R."/>
            <person name="Will R."/>
            <person name="Williams K."/>
            <person name="Yoo H."/>
            <person name="Bruce D."/>
            <person name="Detter C."/>
            <person name="Munk C."/>
            <person name="Brettin T.S."/>
        </authorList>
    </citation>
    <scope>NUCLEOTIDE SEQUENCE [LARGE SCALE GENOMIC DNA]</scope>
    <source>
        <strain>ATCC 23365 / NCTC 10854 / RM-666</strain>
    </source>
</reference>